<proteinExistence type="evidence at protein level"/>
<sequence length="14" mass="1581">LEDNGRTHWAVLVA</sequence>
<comment type="developmental stage">
    <text>Expressed at the newly excysted juvenile stage.</text>
</comment>
<feature type="chain" id="PRO_0000096777" description="Newly excysted juvenile protein 2">
    <location>
        <begin position="1"/>
        <end position="14" status="greater than"/>
    </location>
</feature>
<feature type="non-terminal residue">
    <location>
        <position position="14"/>
    </location>
</feature>
<reference key="1">
    <citation type="journal article" date="1995" name="Biochem. Biophys. Res. Commun.">
        <title>Fasciola hepatica: rapid identification of newly excysted juvenile proteins.</title>
        <authorList>
            <person name="Tkalcevic J."/>
            <person name="Ashman K."/>
            <person name="Meeusen E."/>
        </authorList>
    </citation>
    <scope>PROTEIN SEQUENCE</scope>
</reference>
<name>NEJ2_FASHE</name>
<protein>
    <recommendedName>
        <fullName>Newly excysted juvenile protein 2</fullName>
    </recommendedName>
</protein>
<organism>
    <name type="scientific">Fasciola hepatica</name>
    <name type="common">Liver fluke</name>
    <dbReference type="NCBI Taxonomy" id="6192"/>
    <lineage>
        <taxon>Eukaryota</taxon>
        <taxon>Metazoa</taxon>
        <taxon>Spiralia</taxon>
        <taxon>Lophotrochozoa</taxon>
        <taxon>Platyhelminthes</taxon>
        <taxon>Trematoda</taxon>
        <taxon>Digenea</taxon>
        <taxon>Plagiorchiida</taxon>
        <taxon>Echinostomata</taxon>
        <taxon>Echinostomatoidea</taxon>
        <taxon>Fasciolidae</taxon>
        <taxon>Fasciola</taxon>
    </lineage>
</organism>
<keyword id="KW-0903">Direct protein sequencing</keyword>
<accession>P80526</accession>